<dbReference type="EMBL" id="AB006622">
    <property type="protein sequence ID" value="BAA22953.3"/>
    <property type="status" value="ALT_INIT"/>
    <property type="molecule type" value="mRNA"/>
</dbReference>
<dbReference type="EMBL" id="AL583810">
    <property type="status" value="NOT_ANNOTATED_CDS"/>
    <property type="molecule type" value="Genomic_DNA"/>
</dbReference>
<dbReference type="EMBL" id="BC047913">
    <property type="protein sequence ID" value="AAH47913.1"/>
    <property type="status" value="ALT_FRAME"/>
    <property type="molecule type" value="mRNA"/>
</dbReference>
<dbReference type="EMBL" id="BC112928">
    <property type="protein sequence ID" value="AAI12929.1"/>
    <property type="molecule type" value="mRNA"/>
</dbReference>
<dbReference type="CCDS" id="CCDS45175.1">
    <molecule id="Q9Y4F5-2"/>
</dbReference>
<dbReference type="CCDS" id="CCDS45176.2">
    <molecule id="Q9Y4F5-3"/>
</dbReference>
<dbReference type="PIR" id="T00037">
    <property type="entry name" value="T00037"/>
</dbReference>
<dbReference type="RefSeq" id="NP_001106197.1">
    <molecule id="Q9Y4F5-2"/>
    <property type="nucleotide sequence ID" value="NM_001112726.3"/>
</dbReference>
<dbReference type="RefSeq" id="NP_055820.2">
    <molecule id="Q9Y4F5-3"/>
    <property type="nucleotide sequence ID" value="NM_015005.3"/>
</dbReference>
<dbReference type="RefSeq" id="XP_005267607.1">
    <molecule id="Q9Y4F5-1"/>
    <property type="nucleotide sequence ID" value="XM_005267550.5"/>
</dbReference>
<dbReference type="RefSeq" id="XP_011534967.1">
    <molecule id="Q9Y4F5-1"/>
    <property type="nucleotide sequence ID" value="XM_011536665.3"/>
</dbReference>
<dbReference type="RefSeq" id="XP_011534968.1">
    <molecule id="Q9Y4F5-1"/>
    <property type="nucleotide sequence ID" value="XM_011536666.3"/>
</dbReference>
<dbReference type="RefSeq" id="XP_047287242.1">
    <molecule id="Q9Y4F5-1"/>
    <property type="nucleotide sequence ID" value="XM_047431286.1"/>
</dbReference>
<dbReference type="RefSeq" id="XP_047287243.1">
    <molecule id="Q9Y4F5-1"/>
    <property type="nucleotide sequence ID" value="XM_047431287.1"/>
</dbReference>
<dbReference type="RefSeq" id="XP_054231864.1">
    <molecule id="Q9Y4F5-1"/>
    <property type="nucleotide sequence ID" value="XM_054375889.1"/>
</dbReference>
<dbReference type="RefSeq" id="XP_054231865.1">
    <molecule id="Q9Y4F5-1"/>
    <property type="nucleotide sequence ID" value="XM_054375890.1"/>
</dbReference>
<dbReference type="RefSeq" id="XP_054231866.1">
    <molecule id="Q9Y4F5-1"/>
    <property type="nucleotide sequence ID" value="XM_054375891.1"/>
</dbReference>
<dbReference type="SMR" id="Q9Y4F5"/>
<dbReference type="BioGRID" id="129628">
    <property type="interactions" value="74"/>
</dbReference>
<dbReference type="FunCoup" id="Q9Y4F5">
    <property type="interactions" value="527"/>
</dbReference>
<dbReference type="IntAct" id="Q9Y4F5">
    <property type="interactions" value="43"/>
</dbReference>
<dbReference type="MINT" id="Q9Y4F5"/>
<dbReference type="STRING" id="9606.ENSP00000404151"/>
<dbReference type="GlyGen" id="Q9Y4F5">
    <property type="glycosylation" value="9 sites, 1 O-linked glycan (1 site)"/>
</dbReference>
<dbReference type="iPTMnet" id="Q9Y4F5"/>
<dbReference type="PhosphoSitePlus" id="Q9Y4F5"/>
<dbReference type="SwissPalm" id="Q9Y4F5"/>
<dbReference type="BioMuta" id="CEP170B"/>
<dbReference type="DMDM" id="143342098"/>
<dbReference type="jPOST" id="Q9Y4F5"/>
<dbReference type="MassIVE" id="Q9Y4F5"/>
<dbReference type="PaxDb" id="9606-ENSP00000404151"/>
<dbReference type="PeptideAtlas" id="Q9Y4F5"/>
<dbReference type="ProteomicsDB" id="86197">
    <molecule id="Q9Y4F5-1"/>
</dbReference>
<dbReference type="ProteomicsDB" id="86198">
    <molecule id="Q9Y4F5-2"/>
</dbReference>
<dbReference type="ProteomicsDB" id="86199">
    <molecule id="Q9Y4F5-3"/>
</dbReference>
<dbReference type="Pumba" id="Q9Y4F5"/>
<dbReference type="Antibodypedia" id="54848">
    <property type="antibodies" value="37 antibodies from 14 providers"/>
</dbReference>
<dbReference type="DNASU" id="283638"/>
<dbReference type="Ensembl" id="ENST00000414716.8">
    <molecule id="Q9Y4F5-2"/>
    <property type="protein sequence ID" value="ENSP00000404151.2"/>
    <property type="gene ID" value="ENSG00000099814.17"/>
</dbReference>
<dbReference type="Ensembl" id="ENST00000556508.5">
    <molecule id="Q9Y4F5-3"/>
    <property type="protein sequence ID" value="ENSP00000451249.1"/>
    <property type="gene ID" value="ENSG00000099814.17"/>
</dbReference>
<dbReference type="GeneID" id="283638"/>
<dbReference type="KEGG" id="hsa:283638"/>
<dbReference type="MANE-Select" id="ENST00000414716.8">
    <molecule id="Q9Y4F5-2"/>
    <property type="protein sequence ID" value="ENSP00000404151.2"/>
    <property type="RefSeq nucleotide sequence ID" value="NM_001112726.3"/>
    <property type="RefSeq protein sequence ID" value="NP_001106197.1"/>
</dbReference>
<dbReference type="UCSC" id="uc001yps.4">
    <molecule id="Q9Y4F5-1"/>
    <property type="organism name" value="human"/>
</dbReference>
<dbReference type="AGR" id="HGNC:20362"/>
<dbReference type="CTD" id="283638"/>
<dbReference type="DisGeNET" id="283638"/>
<dbReference type="GeneCards" id="CEP170B"/>
<dbReference type="HGNC" id="HGNC:20362">
    <property type="gene designation" value="CEP170B"/>
</dbReference>
<dbReference type="HPA" id="ENSG00000099814">
    <property type="expression patterns" value="Low tissue specificity"/>
</dbReference>
<dbReference type="MIM" id="620251">
    <property type="type" value="gene"/>
</dbReference>
<dbReference type="neXtProt" id="NX_Q9Y4F5"/>
<dbReference type="OpenTargets" id="ENSG00000099814"/>
<dbReference type="PharmGKB" id="PA134863153"/>
<dbReference type="VEuPathDB" id="HostDB:ENSG00000099814"/>
<dbReference type="eggNOG" id="ENOG502QSH8">
    <property type="taxonomic scope" value="Eukaryota"/>
</dbReference>
<dbReference type="GeneTree" id="ENSGT00940000157058"/>
<dbReference type="InParanoid" id="Q9Y4F5"/>
<dbReference type="OrthoDB" id="444265at2759"/>
<dbReference type="PAN-GO" id="Q9Y4F5">
    <property type="GO annotations" value="0 GO annotations based on evolutionary models"/>
</dbReference>
<dbReference type="PhylomeDB" id="Q9Y4F5"/>
<dbReference type="TreeFam" id="TF328469"/>
<dbReference type="PathwayCommons" id="Q9Y4F5"/>
<dbReference type="SignaLink" id="Q9Y4F5"/>
<dbReference type="BioGRID-ORCS" id="283638">
    <property type="hits" value="20 hits in 1152 CRISPR screens"/>
</dbReference>
<dbReference type="CD-CODE" id="FB4E32DD">
    <property type="entry name" value="Presynaptic clusters and postsynaptic densities"/>
</dbReference>
<dbReference type="ChiTaRS" id="CEP170B">
    <property type="organism name" value="human"/>
</dbReference>
<dbReference type="GenomeRNAi" id="283638"/>
<dbReference type="Pharos" id="Q9Y4F5">
    <property type="development level" value="Tdark"/>
</dbReference>
<dbReference type="PRO" id="PR:Q9Y4F5"/>
<dbReference type="Proteomes" id="UP000005640">
    <property type="component" value="Chromosome 14"/>
</dbReference>
<dbReference type="RNAct" id="Q9Y4F5">
    <property type="molecule type" value="protein"/>
</dbReference>
<dbReference type="Bgee" id="ENSG00000099814">
    <property type="expression patterns" value="Expressed in pancreatic ductal cell and 195 other cell types or tissues"/>
</dbReference>
<dbReference type="ExpressionAtlas" id="Q9Y4F5">
    <property type="expression patterns" value="baseline and differential"/>
</dbReference>
<dbReference type="GO" id="GO:0005737">
    <property type="term" value="C:cytoplasm"/>
    <property type="evidence" value="ECO:0007669"/>
    <property type="project" value="UniProtKB-KW"/>
</dbReference>
<dbReference type="GO" id="GO:0005874">
    <property type="term" value="C:microtubule"/>
    <property type="evidence" value="ECO:0007669"/>
    <property type="project" value="UniProtKB-KW"/>
</dbReference>
<dbReference type="CDD" id="cd22725">
    <property type="entry name" value="FHA_Cep170B"/>
    <property type="match status" value="1"/>
</dbReference>
<dbReference type="Gene3D" id="2.60.200.20">
    <property type="match status" value="1"/>
</dbReference>
<dbReference type="InterPro" id="IPR051176">
    <property type="entry name" value="Cent_Immune-Sig_Mod"/>
</dbReference>
<dbReference type="InterPro" id="IPR029300">
    <property type="entry name" value="CEP170_C"/>
</dbReference>
<dbReference type="InterPro" id="IPR000253">
    <property type="entry name" value="FHA_dom"/>
</dbReference>
<dbReference type="InterPro" id="IPR008984">
    <property type="entry name" value="SMAD_FHA_dom_sf"/>
</dbReference>
<dbReference type="PANTHER" id="PTHR15715">
    <property type="entry name" value="CENTROSOMAL PROTEIN OF 170 KDA"/>
    <property type="match status" value="1"/>
</dbReference>
<dbReference type="PANTHER" id="PTHR15715:SF18">
    <property type="entry name" value="CENTROSOMAL PROTEIN OF 170 KDA PROTEIN B"/>
    <property type="match status" value="1"/>
</dbReference>
<dbReference type="Pfam" id="PF15308">
    <property type="entry name" value="CEP170_C"/>
    <property type="match status" value="1"/>
</dbReference>
<dbReference type="Pfam" id="PF00498">
    <property type="entry name" value="FHA"/>
    <property type="match status" value="1"/>
</dbReference>
<dbReference type="SMART" id="SM00240">
    <property type="entry name" value="FHA"/>
    <property type="match status" value="1"/>
</dbReference>
<dbReference type="SUPFAM" id="SSF49879">
    <property type="entry name" value="SMAD/FHA domain"/>
    <property type="match status" value="1"/>
</dbReference>
<dbReference type="PROSITE" id="PS50006">
    <property type="entry name" value="FHA_DOMAIN"/>
    <property type="match status" value="1"/>
</dbReference>
<accession>Q9Y4F5</accession>
<accession>Q2KHR7</accession>
<accession>Q86TI7</accession>
<organism>
    <name type="scientific">Homo sapiens</name>
    <name type="common">Human</name>
    <dbReference type="NCBI Taxonomy" id="9606"/>
    <lineage>
        <taxon>Eukaryota</taxon>
        <taxon>Metazoa</taxon>
        <taxon>Chordata</taxon>
        <taxon>Craniata</taxon>
        <taxon>Vertebrata</taxon>
        <taxon>Euteleostomi</taxon>
        <taxon>Mammalia</taxon>
        <taxon>Eutheria</taxon>
        <taxon>Euarchontoglires</taxon>
        <taxon>Primates</taxon>
        <taxon>Haplorrhini</taxon>
        <taxon>Catarrhini</taxon>
        <taxon>Hominidae</taxon>
        <taxon>Homo</taxon>
    </lineage>
</organism>
<proteinExistence type="evidence at protein level"/>
<name>C170B_HUMAN</name>
<reference key="1">
    <citation type="journal article" date="1997" name="DNA Res.">
        <title>Construction and characterization of human brain cDNA libraries suitable for analysis of cDNA clones encoding relatively large proteins.</title>
        <authorList>
            <person name="Ohara O."/>
            <person name="Nagase T."/>
            <person name="Ishikawa K."/>
            <person name="Nakajima D."/>
            <person name="Ohira M."/>
            <person name="Seki N."/>
            <person name="Nomura N."/>
        </authorList>
    </citation>
    <scope>NUCLEOTIDE SEQUENCE [LARGE SCALE MRNA] (ISOFORM 2)</scope>
    <source>
        <tissue>Brain</tissue>
    </source>
</reference>
<reference key="2">
    <citation type="submission" date="2005-08" db="EMBL/GenBank/DDBJ databases">
        <authorList>
            <person name="Ohara O."/>
            <person name="Nagase T."/>
            <person name="Kikuno R."/>
            <person name="Nomura N."/>
        </authorList>
    </citation>
    <scope>SEQUENCE REVISION</scope>
</reference>
<reference key="3">
    <citation type="journal article" date="2003" name="Nature">
        <title>The DNA sequence and analysis of human chromosome 14.</title>
        <authorList>
            <person name="Heilig R."/>
            <person name="Eckenberg R."/>
            <person name="Petit J.-L."/>
            <person name="Fonknechten N."/>
            <person name="Da Silva C."/>
            <person name="Cattolico L."/>
            <person name="Levy M."/>
            <person name="Barbe V."/>
            <person name="De Berardinis V."/>
            <person name="Ureta-Vidal A."/>
            <person name="Pelletier E."/>
            <person name="Vico V."/>
            <person name="Anthouard V."/>
            <person name="Rowen L."/>
            <person name="Madan A."/>
            <person name="Qin S."/>
            <person name="Sun H."/>
            <person name="Du H."/>
            <person name="Pepin K."/>
            <person name="Artiguenave F."/>
            <person name="Robert C."/>
            <person name="Cruaud C."/>
            <person name="Bruels T."/>
            <person name="Jaillon O."/>
            <person name="Friedlander L."/>
            <person name="Samson G."/>
            <person name="Brottier P."/>
            <person name="Cure S."/>
            <person name="Segurens B."/>
            <person name="Aniere F."/>
            <person name="Samain S."/>
            <person name="Crespeau H."/>
            <person name="Abbasi N."/>
            <person name="Aiach N."/>
            <person name="Boscus D."/>
            <person name="Dickhoff R."/>
            <person name="Dors M."/>
            <person name="Dubois I."/>
            <person name="Friedman C."/>
            <person name="Gouyvenoux M."/>
            <person name="James R."/>
            <person name="Madan A."/>
            <person name="Mairey-Estrada B."/>
            <person name="Mangenot S."/>
            <person name="Martins N."/>
            <person name="Menard M."/>
            <person name="Oztas S."/>
            <person name="Ratcliffe A."/>
            <person name="Shaffer T."/>
            <person name="Trask B."/>
            <person name="Vacherie B."/>
            <person name="Bellemere C."/>
            <person name="Belser C."/>
            <person name="Besnard-Gonnet M."/>
            <person name="Bartol-Mavel D."/>
            <person name="Boutard M."/>
            <person name="Briez-Silla S."/>
            <person name="Combette S."/>
            <person name="Dufosse-Laurent V."/>
            <person name="Ferron C."/>
            <person name="Lechaplais C."/>
            <person name="Louesse C."/>
            <person name="Muselet D."/>
            <person name="Magdelenat G."/>
            <person name="Pateau E."/>
            <person name="Petit E."/>
            <person name="Sirvain-Trukniewicz P."/>
            <person name="Trybou A."/>
            <person name="Vega-Czarny N."/>
            <person name="Bataille E."/>
            <person name="Bluet E."/>
            <person name="Bordelais I."/>
            <person name="Dubois M."/>
            <person name="Dumont C."/>
            <person name="Guerin T."/>
            <person name="Haffray S."/>
            <person name="Hammadi R."/>
            <person name="Muanga J."/>
            <person name="Pellouin V."/>
            <person name="Robert D."/>
            <person name="Wunderle E."/>
            <person name="Gauguet G."/>
            <person name="Roy A."/>
            <person name="Sainte-Marthe L."/>
            <person name="Verdier J."/>
            <person name="Verdier-Discala C."/>
            <person name="Hillier L.W."/>
            <person name="Fulton L."/>
            <person name="McPherson J."/>
            <person name="Matsuda F."/>
            <person name="Wilson R."/>
            <person name="Scarpelli C."/>
            <person name="Gyapay G."/>
            <person name="Wincker P."/>
            <person name="Saurin W."/>
            <person name="Quetier F."/>
            <person name="Waterston R."/>
            <person name="Hood L."/>
            <person name="Weissenbach J."/>
        </authorList>
    </citation>
    <scope>NUCLEOTIDE SEQUENCE [LARGE SCALE GENOMIC DNA]</scope>
</reference>
<reference key="4">
    <citation type="journal article" date="2004" name="Genome Res.">
        <title>The status, quality, and expansion of the NIH full-length cDNA project: the Mammalian Gene Collection (MGC).</title>
        <authorList>
            <consortium name="The MGC Project Team"/>
        </authorList>
    </citation>
    <scope>NUCLEOTIDE SEQUENCE [LARGE SCALE MRNA] (ISOFORM 3)</scope>
    <scope>NUCLEOTIDE SEQUENCE [LARGE SCALE MRNA] OF 1404-1589 (ISOFORMS 1/2/3)</scope>
    <source>
        <tissue>Eye</tissue>
        <tissue>PNS</tissue>
    </source>
</reference>
<reference key="5">
    <citation type="journal article" date="2008" name="Proc. Natl. Acad. Sci. U.S.A.">
        <title>A quantitative atlas of mitotic phosphorylation.</title>
        <authorList>
            <person name="Dephoure N."/>
            <person name="Zhou C."/>
            <person name="Villen J."/>
            <person name="Beausoleil S.A."/>
            <person name="Bakalarski C.E."/>
            <person name="Elledge S.J."/>
            <person name="Gygi S.P."/>
        </authorList>
    </citation>
    <scope>PHOSPHORYLATION [LARGE SCALE ANALYSIS] AT SER-597; SER-655; SER-721; SER-746; SER-748; SER-751; SER-753; SER-986; SER-988; SER-1135; THR-1304 AND SER-1545</scope>
    <scope>IDENTIFICATION BY MASS SPECTROMETRY [LARGE SCALE ANALYSIS]</scope>
    <source>
        <tissue>Cervix carcinoma</tissue>
    </source>
</reference>
<reference key="6">
    <citation type="journal article" date="2009" name="Sci. Signal.">
        <title>Quantitative phosphoproteomic analysis of T cell receptor signaling reveals system-wide modulation of protein-protein interactions.</title>
        <authorList>
            <person name="Mayya V."/>
            <person name="Lundgren D.H."/>
            <person name="Hwang S.-I."/>
            <person name="Rezaul K."/>
            <person name="Wu L."/>
            <person name="Eng J.K."/>
            <person name="Rodionov V."/>
            <person name="Han D.K."/>
        </authorList>
    </citation>
    <scope>PHOSPHORYLATION [LARGE SCALE ANALYSIS] AT SER-986; SER-988; SER-1135 AND THR-1304</scope>
    <scope>IDENTIFICATION BY MASS SPECTROMETRY [LARGE SCALE ANALYSIS]</scope>
    <source>
        <tissue>Leukemic T-cell</tissue>
    </source>
</reference>
<reference key="7">
    <citation type="journal article" date="2010" name="Sci. Signal.">
        <title>Quantitative phosphoproteomics reveals widespread full phosphorylation site occupancy during mitosis.</title>
        <authorList>
            <person name="Olsen J.V."/>
            <person name="Vermeulen M."/>
            <person name="Santamaria A."/>
            <person name="Kumar C."/>
            <person name="Miller M.L."/>
            <person name="Jensen L.J."/>
            <person name="Gnad F."/>
            <person name="Cox J."/>
            <person name="Jensen T.S."/>
            <person name="Nigg E.A."/>
            <person name="Brunak S."/>
            <person name="Mann M."/>
        </authorList>
    </citation>
    <scope>PHOSPHORYLATION [LARGE SCALE ANALYSIS] AT SER-1545 AND SER-1548</scope>
    <scope>IDENTIFICATION BY MASS SPECTROMETRY [LARGE SCALE ANALYSIS]</scope>
    <source>
        <tissue>Cervix carcinoma</tissue>
    </source>
</reference>
<reference key="8">
    <citation type="journal article" date="2011" name="Sci. Signal.">
        <title>System-wide temporal characterization of the proteome and phosphoproteome of human embryonic stem cell differentiation.</title>
        <authorList>
            <person name="Rigbolt K.T."/>
            <person name="Prokhorova T.A."/>
            <person name="Akimov V."/>
            <person name="Henningsen J."/>
            <person name="Johansen P.T."/>
            <person name="Kratchmarova I."/>
            <person name="Kassem M."/>
            <person name="Mann M."/>
            <person name="Olsen J.V."/>
            <person name="Blagoev B."/>
        </authorList>
    </citation>
    <scope>PHOSPHORYLATION [LARGE SCALE ANALYSIS] AT SER-986 AND SER-988</scope>
    <scope>IDENTIFICATION BY MASS SPECTROMETRY [LARGE SCALE ANALYSIS]</scope>
</reference>
<reference key="9">
    <citation type="journal article" date="2013" name="J. Proteome Res.">
        <title>Toward a comprehensive characterization of a human cancer cell phosphoproteome.</title>
        <authorList>
            <person name="Zhou H."/>
            <person name="Di Palma S."/>
            <person name="Preisinger C."/>
            <person name="Peng M."/>
            <person name="Polat A.N."/>
            <person name="Heck A.J."/>
            <person name="Mohammed S."/>
        </authorList>
    </citation>
    <scope>PHOSPHORYLATION [LARGE SCALE ANALYSIS] AT SER-360; SER-421; SER-492; SER-597; SER-721; SER-772; SER-829; SER-853; SER-972; SER-1135 AND SER-1179</scope>
    <scope>IDENTIFICATION BY MASS SPECTROMETRY [LARGE SCALE ANALYSIS]</scope>
    <source>
        <tissue>Cervix carcinoma</tissue>
    </source>
</reference>
<reference key="10">
    <citation type="journal article" date="2014" name="J. Proteomics">
        <title>An enzyme assisted RP-RPLC approach for in-depth analysis of human liver phosphoproteome.</title>
        <authorList>
            <person name="Bian Y."/>
            <person name="Song C."/>
            <person name="Cheng K."/>
            <person name="Dong M."/>
            <person name="Wang F."/>
            <person name="Huang J."/>
            <person name="Sun D."/>
            <person name="Wang L."/>
            <person name="Ye M."/>
            <person name="Zou H."/>
        </authorList>
    </citation>
    <scope>PHOSPHORYLATION [LARGE SCALE ANALYSIS] AT THR-542; SER-619; SER-655; SER-829; SER-853; SER-954 AND SER-1548</scope>
    <scope>IDENTIFICATION BY MASS SPECTROMETRY [LARGE SCALE ANALYSIS]</scope>
    <source>
        <tissue>Liver</tissue>
    </source>
</reference>
<evidence type="ECO:0000250" key="1">
    <source>
        <dbReference type="UniProtKB" id="Q498L0"/>
    </source>
</evidence>
<evidence type="ECO:0000250" key="2">
    <source>
        <dbReference type="UniProtKB" id="Q5SW79"/>
    </source>
</evidence>
<evidence type="ECO:0000250" key="3">
    <source>
        <dbReference type="UniProtKB" id="Q80U49"/>
    </source>
</evidence>
<evidence type="ECO:0000255" key="4">
    <source>
        <dbReference type="PROSITE-ProRule" id="PRU00086"/>
    </source>
</evidence>
<evidence type="ECO:0000256" key="5">
    <source>
        <dbReference type="SAM" id="MobiDB-lite"/>
    </source>
</evidence>
<evidence type="ECO:0000303" key="6">
    <source>
    </source>
</evidence>
<evidence type="ECO:0000303" key="7">
    <source>
    </source>
</evidence>
<evidence type="ECO:0000305" key="8"/>
<evidence type="ECO:0007744" key="9">
    <source>
    </source>
</evidence>
<evidence type="ECO:0007744" key="10">
    <source>
    </source>
</evidence>
<evidence type="ECO:0007744" key="11">
    <source>
    </source>
</evidence>
<evidence type="ECO:0007744" key="12">
    <source>
    </source>
</evidence>
<evidence type="ECO:0007744" key="13">
    <source>
    </source>
</evidence>
<evidence type="ECO:0007744" key="14">
    <source>
    </source>
</evidence>
<keyword id="KW-0025">Alternative splicing</keyword>
<keyword id="KW-0963">Cytoplasm</keyword>
<keyword id="KW-0206">Cytoskeleton</keyword>
<keyword id="KW-0493">Microtubule</keyword>
<keyword id="KW-0597">Phosphoprotein</keyword>
<keyword id="KW-1267">Proteomics identification</keyword>
<keyword id="KW-1185">Reference proteome</keyword>
<comment type="function">
    <text evidence="2">Plays a role in microtubule organization.</text>
</comment>
<comment type="interaction">
    <interactant intactId="EBI-12950757">
        <id>Q9Y4F5-3</id>
    </interactant>
    <interactant intactId="EBI-348399">
        <id>P22607</id>
        <label>FGFR3</label>
    </interactant>
    <organismsDiffer>false</organismsDiffer>
    <experiments>3</experiments>
</comment>
<comment type="interaction">
    <interactant intactId="EBI-12950757">
        <id>Q9Y4F5-3</id>
    </interactant>
    <interactant intactId="EBI-10226858">
        <id>Q0VDC6</id>
        <label>FKBP1A</label>
    </interactant>
    <organismsDiffer>false</organismsDiffer>
    <experiments>3</experiments>
</comment>
<comment type="interaction">
    <interactant intactId="EBI-12950757">
        <id>Q9Y4F5-3</id>
    </interactant>
    <interactant intactId="EBI-350145">
        <id>P01112</id>
        <label>HRAS</label>
    </interactant>
    <organismsDiffer>false</organismsDiffer>
    <experiments>3</experiments>
</comment>
<comment type="interaction">
    <interactant intactId="EBI-12950757">
        <id>Q9Y4F5-3</id>
    </interactant>
    <interactant intactId="EBI-356991">
        <id>P54652</id>
        <label>HSPA2</label>
    </interactant>
    <organismsDiffer>false</organismsDiffer>
    <experiments>3</experiments>
</comment>
<comment type="interaction">
    <interactant intactId="EBI-12950757">
        <id>Q9Y4F5-3</id>
    </interactant>
    <interactant intactId="EBI-741158">
        <id>Q96HA8</id>
        <label>NTAQ1</label>
    </interactant>
    <organismsDiffer>false</organismsDiffer>
    <experiments>3</experiments>
</comment>
<comment type="interaction">
    <interactant intactId="EBI-12950757">
        <id>Q9Y4F5-3</id>
    </interactant>
    <interactant intactId="EBI-1053431">
        <id>P49591</id>
        <label>SARS1</label>
    </interactant>
    <organismsDiffer>false</organismsDiffer>
    <experiments>3</experiments>
</comment>
<comment type="interaction">
    <interactant intactId="EBI-12950757">
        <id>Q9Y4F5-3</id>
    </interactant>
    <interactant intactId="EBI-358993">
        <id>Q15645</id>
        <label>TRIP13</label>
    </interactant>
    <organismsDiffer>false</organismsDiffer>
    <experiments>3</experiments>
</comment>
<comment type="subcellular location">
    <subcellularLocation>
        <location evidence="1">Cytoplasm</location>
        <location evidence="1">Cytoskeleton</location>
    </subcellularLocation>
</comment>
<comment type="alternative products">
    <event type="alternative splicing"/>
    <isoform>
        <id>Q9Y4F5-1</id>
        <name>1</name>
        <sequence type="displayed"/>
    </isoform>
    <isoform>
        <id>Q9Y4F5-2</id>
        <name>2</name>
        <sequence type="described" ref="VSP_024248"/>
    </isoform>
    <isoform>
        <id>Q9Y4F5-3</id>
        <name>3</name>
        <sequence type="described" ref="VSP_024247"/>
    </isoform>
</comment>
<comment type="similarity">
    <text evidence="8">Belongs to the CEP170 family.</text>
</comment>
<comment type="sequence caution" evidence="8">
    <conflict type="frameshift">
        <sequence resource="EMBL-CDS" id="AAH47913"/>
    </conflict>
</comment>
<comment type="sequence caution" evidence="8">
    <conflict type="erroneous initiation">
        <sequence resource="EMBL-CDS" id="BAA22953"/>
    </conflict>
</comment>
<protein>
    <recommendedName>
        <fullName>Centrosomal protein of 170 kDa protein B</fullName>
    </recommendedName>
    <alternativeName>
        <fullName>Centrosomal protein 170B</fullName>
        <shortName>Cep170B</shortName>
    </alternativeName>
</protein>
<gene>
    <name type="primary">CEP170B</name>
    <name type="synonym">FAM68C</name>
    <name type="synonym">KIAA0284</name>
</gene>
<sequence>MSATSWFLVSSSGARHRLPRELIFVGREECELMLQSRSVDKQHAVINYDQDRDEHWVKDLGSLNGTFVNDMRIPDQKYVTLKLNDVIRFGYDSNMYVLERVQHRVPEEALKHEKYTSQLQVSVKGLAPKRSEALPEHTPYCEASNPRPEKGDRRPGTEAASYRTPLYGQPSWWGEDDGSTLPDAQRQGEPYPERPKGPVQQDGELHGFRAPAEPQGCSFRREPSYFEIPTKETPQPSQPPEVPAHEMPTKDAEAGGGGAAPVVQSHASFTIEFDDCSPGKMKIKDHITKFSLRQRRPPGKEATPGEMVSAETKVADWLVQNDPSLLHRVGPGDDRHSTKSDLPVHTRTLKGHKHEDGTQSDSEDPLAKAASAAGVPLEASGEQVRLQRQIKRDPQELLHNQQAFVIEFFDEDTPRKKRSQSFTHSPSGDPKADKRRGPTPADRDRPSVPAPVQAGGRSSGPQRAGSLKREKTEERLGSPSPASRTPARPFGSVGRRSRLAQDFMAQCLRESSPAARPSPEKVPPVLPAPLTPHGTSPVGPPTPPPAPTDPQLTKARKQEEDDSLSDAGTYTIETEAQDTEVEEARKMIDQVFGVLESPELSRASSATFRPVIRGDRDESDDGGVAQRMALLQEFASRPLGAAPQAEHQGLPVPGSPGGQKWVSRWASLADSYSDPGLTEDGLGRRGGEPEGSLPVRMRRRLPQLPSERADSPAGPESSRRSGPGPPELDSEQPSRLFGQEELDPDSLSDASGSDGGRGPEPGVEPQDSRRRSPQEGPTWSRGRRSPRAPGEPTPASFFIGDQNGDAVLSRKPLAAPGDGEGLGQTAQPSPPARDGVYVSANGRMVIQLRPGRSPEPDGPAPAFLRQESFTKEPASGPPAPGKPPHISSHPLLQDLAATRAARMDFHSQDTHLILKETETALAALEARLLSNSVDAECEGGSTPRPPEDALSGDSDVDTASTVSLRSGKSGPSPTTPQPLRAQKEMSPSPPAAQDPGGTALVSAREQSSERQHHPLGPTDMGRGEPVRRSAIRRGHRPRGSLDWPSEERGPVLAHLPSSDVMASNHETPEATGAGRLGSRRKPAAPPPSPAAREEQSRSSASSQKGPQALTRSNSLSTPRPTRASRLRRARLGDASDTEAADGERGSLGNPEPVGRPAAEQAKKLSRLDILAMPRKRAGSFTGTSDPEAAPARTSFSGRSVELCCASRKPTMAEARAVSRKAANTATTTGPRQPFSRARSGSARYTSNTRRRQQGSDYTSTSEEEYGSRHGSPKHTRSHTSTATQTPRAGSSSRARSRAPGPRDTDDDEEEPDPYGFIVQTAEIAEIARLSQTLVKDVAILAQEIHDVAGDGDTLGSSEPAHSASLSNMPSTPASTISAREELVQRIPEASLNFQKVPPGSLNSRDFDQNMNDSCEDALANKTRPRNREEVIFDNLMLNPVSQLSQAIRENTEHLAEKMKILFQNTGRAWEDLEARINAENEVPILKTSNKEISSILKELRRVQKQLEVINAIVDPSGSLDLLTGNRSLASSAQPGLGKGRVAAQSPPSPASAEALLPALPLRNFPQRASCGPPSLPDPTFLPDAERFLI</sequence>
<feature type="chain" id="PRO_0000282889" description="Centrosomal protein of 170 kDa protein B">
    <location>
        <begin position="1"/>
        <end position="1589"/>
    </location>
</feature>
<feature type="domain" description="FHA" evidence="4">
    <location>
        <begin position="23"/>
        <end position="73"/>
    </location>
</feature>
<feature type="region of interest" description="Disordered" evidence="5">
    <location>
        <begin position="130"/>
        <end position="261"/>
    </location>
</feature>
<feature type="region of interest" description="Disordered" evidence="5">
    <location>
        <begin position="287"/>
        <end position="309"/>
    </location>
</feature>
<feature type="region of interest" description="Disordered" evidence="5">
    <location>
        <begin position="325"/>
        <end position="388"/>
    </location>
</feature>
<feature type="region of interest" description="Disordered" evidence="5">
    <location>
        <begin position="409"/>
        <end position="583"/>
    </location>
</feature>
<feature type="region of interest" description="Disordered" evidence="5">
    <location>
        <begin position="598"/>
        <end position="895"/>
    </location>
</feature>
<feature type="region of interest" description="Disordered" evidence="5">
    <location>
        <begin position="934"/>
        <end position="1316"/>
    </location>
</feature>
<feature type="region of interest" description="Disordered" evidence="5">
    <location>
        <begin position="1350"/>
        <end position="1374"/>
    </location>
</feature>
<feature type="region of interest" description="Disordered" evidence="5">
    <location>
        <begin position="1532"/>
        <end position="1552"/>
    </location>
</feature>
<feature type="compositionally biased region" description="Basic and acidic residues" evidence="5">
    <location>
        <begin position="147"/>
        <end position="156"/>
    </location>
</feature>
<feature type="compositionally biased region" description="Basic and acidic residues" evidence="5">
    <location>
        <begin position="243"/>
        <end position="253"/>
    </location>
</feature>
<feature type="compositionally biased region" description="Basic and acidic residues" evidence="5">
    <location>
        <begin position="330"/>
        <end position="344"/>
    </location>
</feature>
<feature type="compositionally biased region" description="Basic and acidic residues" evidence="5">
    <location>
        <begin position="430"/>
        <end position="446"/>
    </location>
</feature>
<feature type="compositionally biased region" description="Basic and acidic residues" evidence="5">
    <location>
        <begin position="467"/>
        <end position="476"/>
    </location>
</feature>
<feature type="compositionally biased region" description="Low complexity" evidence="5">
    <location>
        <begin position="478"/>
        <end position="489"/>
    </location>
</feature>
<feature type="compositionally biased region" description="Pro residues" evidence="5">
    <location>
        <begin position="520"/>
        <end position="530"/>
    </location>
</feature>
<feature type="compositionally biased region" description="Pro residues" evidence="5">
    <location>
        <begin position="538"/>
        <end position="548"/>
    </location>
</feature>
<feature type="compositionally biased region" description="Low complexity" evidence="5">
    <location>
        <begin position="711"/>
        <end position="722"/>
    </location>
</feature>
<feature type="compositionally biased region" description="Polar residues" evidence="5">
    <location>
        <begin position="957"/>
        <end position="972"/>
    </location>
</feature>
<feature type="compositionally biased region" description="Basic residues" evidence="5">
    <location>
        <begin position="1029"/>
        <end position="1038"/>
    </location>
</feature>
<feature type="compositionally biased region" description="Polar residues" evidence="5">
    <location>
        <begin position="1221"/>
        <end position="1230"/>
    </location>
</feature>
<feature type="compositionally biased region" description="Low complexity" evidence="5">
    <location>
        <begin position="1286"/>
        <end position="1301"/>
    </location>
</feature>
<feature type="compositionally biased region" description="Polar residues" evidence="5">
    <location>
        <begin position="1363"/>
        <end position="1374"/>
    </location>
</feature>
<feature type="compositionally biased region" description="Low complexity" evidence="5">
    <location>
        <begin position="1542"/>
        <end position="1552"/>
    </location>
</feature>
<feature type="modified residue" description="Phosphoserine" evidence="13">
    <location>
        <position position="360"/>
    </location>
</feature>
<feature type="modified residue" description="Phosphoserine" evidence="13">
    <location>
        <position position="421"/>
    </location>
</feature>
<feature type="modified residue" description="Phosphoserine" evidence="3">
    <location>
        <position position="480"/>
    </location>
</feature>
<feature type="modified residue" description="Phosphoserine" evidence="13">
    <location>
        <position position="492"/>
    </location>
</feature>
<feature type="modified residue" description="Phosphoserine" evidence="3">
    <location>
        <position position="536"/>
    </location>
</feature>
<feature type="modified residue" description="Phosphothreonine" evidence="14">
    <location>
        <position position="542"/>
    </location>
</feature>
<feature type="modified residue" description="Phosphoserine" evidence="9 13">
    <location>
        <position position="597"/>
    </location>
</feature>
<feature type="modified residue" description="Phosphoserine" evidence="14">
    <location>
        <position position="619"/>
    </location>
</feature>
<feature type="modified residue" description="Phosphoserine" evidence="9 14">
    <location>
        <position position="655"/>
    </location>
</feature>
<feature type="modified residue" description="Phosphoserine" evidence="3">
    <location>
        <position position="711"/>
    </location>
</feature>
<feature type="modified residue" description="Phosphoserine" evidence="9 13">
    <location>
        <position position="721"/>
    </location>
</feature>
<feature type="modified residue" description="Phosphoserine" evidence="9">
    <location>
        <position position="746"/>
    </location>
</feature>
<feature type="modified residue" description="Phosphoserine" evidence="9">
    <location>
        <position position="748"/>
    </location>
</feature>
<feature type="modified residue" description="Phosphoserine" evidence="9">
    <location>
        <position position="751"/>
    </location>
</feature>
<feature type="modified residue" description="Phosphoserine" evidence="9">
    <location>
        <position position="753"/>
    </location>
</feature>
<feature type="modified residue" description="Phosphoserine" evidence="13">
    <location>
        <position position="772"/>
    </location>
</feature>
<feature type="modified residue" description="Phosphoserine" evidence="13 14">
    <location>
        <position position="829"/>
    </location>
</feature>
<feature type="modified residue" description="Phosphoserine" evidence="13 14">
    <location>
        <position position="853"/>
    </location>
</feature>
<feature type="modified residue" description="Phosphoserine" evidence="14">
    <location>
        <position position="954"/>
    </location>
</feature>
<feature type="modified residue" description="Phosphoserine" evidence="13">
    <location>
        <position position="972"/>
    </location>
</feature>
<feature type="modified residue" description="Phosphoserine" evidence="9 10 12">
    <location>
        <position position="986"/>
    </location>
</feature>
<feature type="modified residue" description="Phosphoserine" evidence="9 10 12">
    <location>
        <position position="988"/>
    </location>
</feature>
<feature type="modified residue" description="Phosphoserine" evidence="9 10 13">
    <location>
        <position position="1135"/>
    </location>
</feature>
<feature type="modified residue" description="Phosphoserine" evidence="13">
    <location>
        <position position="1179"/>
    </location>
</feature>
<feature type="modified residue" description="Phosphoserine" evidence="3">
    <location>
        <position position="1199"/>
    </location>
</feature>
<feature type="modified residue" description="Phosphothreonine" evidence="9 10">
    <location>
        <position position="1304"/>
    </location>
</feature>
<feature type="modified residue" description="Phosphoserine" evidence="3">
    <location>
        <position position="1356"/>
    </location>
</feature>
<feature type="modified residue" description="Phosphoserine" evidence="3">
    <location>
        <position position="1362"/>
    </location>
</feature>
<feature type="modified residue" description="Phosphoserine" evidence="9 11">
    <location>
        <position position="1545"/>
    </location>
</feature>
<feature type="modified residue" description="Phosphoserine" evidence="11 14">
    <location>
        <position position="1548"/>
    </location>
</feature>
<feature type="splice variant" id="VSP_024247" description="In isoform 3." evidence="6">
    <location>
        <begin position="1"/>
        <end position="70"/>
    </location>
</feature>
<feature type="splice variant" id="VSP_024248" description="In isoform 2." evidence="7">
    <original>NTRRRQQGSDYTSTSEEEYGSRHGSPKHTRSHTSTA</original>
    <variation>T</variation>
    <location>
        <begin position="1247"/>
        <end position="1282"/>
    </location>
</feature>
<feature type="sequence conflict" description="In Ref. 1; BAA22953." evidence="8" ref="1">
    <original>A</original>
    <variation>T</variation>
    <location>
        <position position="315"/>
    </location>
</feature>